<keyword id="KW-0150">Chloroplast</keyword>
<keyword id="KW-0934">Plastid</keyword>
<keyword id="KW-0687">Ribonucleoprotein</keyword>
<keyword id="KW-0689">Ribosomal protein</keyword>
<keyword id="KW-0694">RNA-binding</keyword>
<keyword id="KW-0699">rRNA-binding</keyword>
<sequence>MAKKSLIEREKKRKILVQKYKFIRQSLKNEIKDASSLEEILAIHKELQSLPRNSAPTRLHRRCFLTGRPRSNYRDFGLSRHVLREMAHTCLLPGVTKSSW</sequence>
<feature type="chain" id="PRO_0000354398" description="Small ribosomal subunit protein uS14c">
    <location>
        <begin position="1"/>
        <end position="100"/>
    </location>
</feature>
<comment type="function">
    <text evidence="1">Binds 16S rRNA, required for the assembly of 30S particles.</text>
</comment>
<comment type="subunit">
    <text evidence="1">Part of the 30S ribosomal subunit.</text>
</comment>
<comment type="subcellular location">
    <subcellularLocation>
        <location>Plastid</location>
        <location>Chloroplast</location>
    </subcellularLocation>
</comment>
<comment type="similarity">
    <text evidence="1">Belongs to the universal ribosomal protein uS14 family.</text>
</comment>
<reference key="1">
    <citation type="journal article" date="2007" name="Am. Fern J.">
        <title>The complete plastid genome sequence of Angiopteris evecta (G. Forst.) Hoffm. (Marattiaceae).</title>
        <authorList>
            <person name="Roper J.M."/>
            <person name="Hansen S.K."/>
            <person name="Wolf P.G."/>
            <person name="Karol K.G."/>
            <person name="Mandoli D.F."/>
            <person name="Everett K.D.E."/>
            <person name="Kuehl J.V."/>
            <person name="Boore J.L."/>
        </authorList>
    </citation>
    <scope>NUCLEOTIDE SEQUENCE [LARGE SCALE GENOMIC DNA]</scope>
</reference>
<dbReference type="EMBL" id="DQ821119">
    <property type="protein sequence ID" value="ABG79598.1"/>
    <property type="molecule type" value="Genomic_DNA"/>
</dbReference>
<dbReference type="RefSeq" id="YP_001023699.1">
    <property type="nucleotide sequence ID" value="NC_008829.1"/>
</dbReference>
<dbReference type="SMR" id="A2T331"/>
<dbReference type="GeneID" id="4788249"/>
<dbReference type="GO" id="GO:0009507">
    <property type="term" value="C:chloroplast"/>
    <property type="evidence" value="ECO:0007669"/>
    <property type="project" value="UniProtKB-SubCell"/>
</dbReference>
<dbReference type="GO" id="GO:0015935">
    <property type="term" value="C:small ribosomal subunit"/>
    <property type="evidence" value="ECO:0007669"/>
    <property type="project" value="TreeGrafter"/>
</dbReference>
<dbReference type="GO" id="GO:0019843">
    <property type="term" value="F:rRNA binding"/>
    <property type="evidence" value="ECO:0007669"/>
    <property type="project" value="UniProtKB-UniRule"/>
</dbReference>
<dbReference type="GO" id="GO:0003735">
    <property type="term" value="F:structural constituent of ribosome"/>
    <property type="evidence" value="ECO:0007669"/>
    <property type="project" value="InterPro"/>
</dbReference>
<dbReference type="GO" id="GO:0006412">
    <property type="term" value="P:translation"/>
    <property type="evidence" value="ECO:0007669"/>
    <property type="project" value="UniProtKB-UniRule"/>
</dbReference>
<dbReference type="FunFam" id="1.10.287.1480:FF:000001">
    <property type="entry name" value="30S ribosomal protein S14"/>
    <property type="match status" value="1"/>
</dbReference>
<dbReference type="Gene3D" id="1.10.287.1480">
    <property type="match status" value="1"/>
</dbReference>
<dbReference type="HAMAP" id="MF_00537">
    <property type="entry name" value="Ribosomal_uS14_1"/>
    <property type="match status" value="1"/>
</dbReference>
<dbReference type="InterPro" id="IPR001209">
    <property type="entry name" value="Ribosomal_uS14"/>
</dbReference>
<dbReference type="InterPro" id="IPR023036">
    <property type="entry name" value="Ribosomal_uS14_bac/plastid"/>
</dbReference>
<dbReference type="InterPro" id="IPR018271">
    <property type="entry name" value="Ribosomal_uS14_CS"/>
</dbReference>
<dbReference type="NCBIfam" id="NF006477">
    <property type="entry name" value="PRK08881.1"/>
    <property type="match status" value="1"/>
</dbReference>
<dbReference type="PANTHER" id="PTHR19836">
    <property type="entry name" value="30S RIBOSOMAL PROTEIN S14"/>
    <property type="match status" value="1"/>
</dbReference>
<dbReference type="PANTHER" id="PTHR19836:SF19">
    <property type="entry name" value="SMALL RIBOSOMAL SUBUNIT PROTEIN US14M"/>
    <property type="match status" value="1"/>
</dbReference>
<dbReference type="Pfam" id="PF00253">
    <property type="entry name" value="Ribosomal_S14"/>
    <property type="match status" value="1"/>
</dbReference>
<dbReference type="SUPFAM" id="SSF57716">
    <property type="entry name" value="Glucocorticoid receptor-like (DNA-binding domain)"/>
    <property type="match status" value="1"/>
</dbReference>
<dbReference type="PROSITE" id="PS00527">
    <property type="entry name" value="RIBOSOMAL_S14"/>
    <property type="match status" value="1"/>
</dbReference>
<accession>A2T331</accession>
<name>RR14_ANGEV</name>
<geneLocation type="chloroplast"/>
<gene>
    <name evidence="1" type="primary">rps14</name>
</gene>
<proteinExistence type="inferred from homology"/>
<organism>
    <name type="scientific">Angiopteris evecta</name>
    <name type="common">Mule's foot fern</name>
    <name type="synonym">Polypodium evectum</name>
    <dbReference type="NCBI Taxonomy" id="13825"/>
    <lineage>
        <taxon>Eukaryota</taxon>
        <taxon>Viridiplantae</taxon>
        <taxon>Streptophyta</taxon>
        <taxon>Embryophyta</taxon>
        <taxon>Tracheophyta</taxon>
        <taxon>Polypodiopsida</taxon>
        <taxon>Marattiidae</taxon>
        <taxon>Marattiales</taxon>
        <taxon>Marattiaceae</taxon>
        <taxon>Angiopteris</taxon>
    </lineage>
</organism>
<protein>
    <recommendedName>
        <fullName evidence="1">Small ribosomal subunit protein uS14c</fullName>
    </recommendedName>
    <alternativeName>
        <fullName evidence="2">30S ribosomal protein S14, chloroplastic</fullName>
    </alternativeName>
</protein>
<evidence type="ECO:0000255" key="1">
    <source>
        <dbReference type="HAMAP-Rule" id="MF_00537"/>
    </source>
</evidence>
<evidence type="ECO:0000305" key="2"/>